<keyword id="KW-0002">3D-structure</keyword>
<keyword id="KW-0903">Direct protein sequencing</keyword>
<keyword id="KW-0507">mRNA processing</keyword>
<keyword id="KW-0508">mRNA splicing</keyword>
<keyword id="KW-0539">Nucleus</keyword>
<keyword id="KW-1185">Reference proteome</keyword>
<keyword id="KW-0677">Repeat</keyword>
<keyword id="KW-0747">Spliceosome</keyword>
<keyword id="KW-0853">WD repeat</keyword>
<dbReference type="EMBL" id="AF251148">
    <property type="protein sequence ID" value="AAG01399.1"/>
    <property type="molecule type" value="Genomic_DNA"/>
</dbReference>
<dbReference type="EMBL" id="AB004535">
    <property type="protein sequence ID" value="BAA21403.1"/>
    <property type="molecule type" value="Genomic_DNA"/>
</dbReference>
<dbReference type="EMBL" id="CU329671">
    <property type="protein sequence ID" value="CAC37375.1"/>
    <property type="molecule type" value="Genomic_DNA"/>
</dbReference>
<dbReference type="RefSeq" id="NP_595604.1">
    <property type="nucleotide sequence ID" value="NM_001021499.2"/>
</dbReference>
<dbReference type="PDB" id="3JB9">
    <property type="method" value="EM"/>
    <property type="resolution" value="3.60 A"/>
    <property type="chains" value="K=149-473"/>
</dbReference>
<dbReference type="PDB" id="9ESH">
    <property type="method" value="EM"/>
    <property type="resolution" value="3.20 A"/>
    <property type="chains" value="K=1-473"/>
</dbReference>
<dbReference type="PDB" id="9ESI">
    <property type="method" value="EM"/>
    <property type="resolution" value="3.10 A"/>
    <property type="chains" value="K=1-473"/>
</dbReference>
<dbReference type="PDBsum" id="3JB9"/>
<dbReference type="PDBsum" id="9ESH"/>
<dbReference type="PDBsum" id="9ESI"/>
<dbReference type="EMDB" id="EMD-19941"/>
<dbReference type="EMDB" id="EMD-19942"/>
<dbReference type="SMR" id="O13615"/>
<dbReference type="BioGRID" id="280336">
    <property type="interactions" value="28"/>
</dbReference>
<dbReference type="FunCoup" id="O13615">
    <property type="interactions" value="604"/>
</dbReference>
<dbReference type="IntAct" id="O13615">
    <property type="interactions" value="8"/>
</dbReference>
<dbReference type="STRING" id="284812.O13615"/>
<dbReference type="iPTMnet" id="O13615"/>
<dbReference type="PaxDb" id="4896-SPBP22H7.07.1"/>
<dbReference type="EnsemblFungi" id="SPBP22H7.07.1">
    <property type="protein sequence ID" value="SPBP22H7.07.1:pep"/>
    <property type="gene ID" value="SPBP22H7.07"/>
</dbReference>
<dbReference type="GeneID" id="3361260"/>
<dbReference type="KEGG" id="spo:3361260"/>
<dbReference type="PomBase" id="SPBP22H7.07">
    <property type="gene designation" value="prp5"/>
</dbReference>
<dbReference type="VEuPathDB" id="FungiDB:SPBP22H7.07"/>
<dbReference type="eggNOG" id="KOG0285">
    <property type="taxonomic scope" value="Eukaryota"/>
</dbReference>
<dbReference type="HOGENOM" id="CLU_000288_72_2_1"/>
<dbReference type="InParanoid" id="O13615"/>
<dbReference type="OMA" id="FAMCFDQ"/>
<dbReference type="PhylomeDB" id="O13615"/>
<dbReference type="Reactome" id="R-SPO-72163">
    <property type="pathway name" value="mRNA Splicing - Major Pathway"/>
</dbReference>
<dbReference type="PRO" id="PR:O13615"/>
<dbReference type="Proteomes" id="UP000002485">
    <property type="component" value="Chromosome II"/>
</dbReference>
<dbReference type="GO" id="GO:0071013">
    <property type="term" value="C:catalytic step 2 spliceosome"/>
    <property type="evidence" value="ECO:0000318"/>
    <property type="project" value="GO_Central"/>
</dbReference>
<dbReference type="GO" id="GO:0005634">
    <property type="term" value="C:nucleus"/>
    <property type="evidence" value="ECO:0007005"/>
    <property type="project" value="PomBase"/>
</dbReference>
<dbReference type="GO" id="GO:0071014">
    <property type="term" value="C:post-mRNA release spliceosomal complex"/>
    <property type="evidence" value="ECO:0000314"/>
    <property type="project" value="PomBase"/>
</dbReference>
<dbReference type="GO" id="GO:0000974">
    <property type="term" value="C:Prp19 complex"/>
    <property type="evidence" value="ECO:0000314"/>
    <property type="project" value="PomBase"/>
</dbReference>
<dbReference type="GO" id="GO:0005681">
    <property type="term" value="C:spliceosomal complex"/>
    <property type="evidence" value="ECO:0000314"/>
    <property type="project" value="PomBase"/>
</dbReference>
<dbReference type="GO" id="GO:0045292">
    <property type="term" value="P:mRNA cis splicing, via spliceosome"/>
    <property type="evidence" value="ECO:0000315"/>
    <property type="project" value="PomBase"/>
</dbReference>
<dbReference type="GO" id="GO:0000398">
    <property type="term" value="P:mRNA splicing, via spliceosome"/>
    <property type="evidence" value="ECO:0000318"/>
    <property type="project" value="GO_Central"/>
</dbReference>
<dbReference type="CDD" id="cd00200">
    <property type="entry name" value="WD40"/>
    <property type="match status" value="1"/>
</dbReference>
<dbReference type="FunFam" id="2.130.10.10:FF:000012">
    <property type="entry name" value="Putative pleiotropic regulator 1"/>
    <property type="match status" value="1"/>
</dbReference>
<dbReference type="Gene3D" id="2.130.10.10">
    <property type="entry name" value="YVTN repeat-like/Quinoprotein amine dehydrogenase"/>
    <property type="match status" value="1"/>
</dbReference>
<dbReference type="InterPro" id="IPR020472">
    <property type="entry name" value="G-protein_beta_WD-40_rep"/>
</dbReference>
<dbReference type="InterPro" id="IPR045241">
    <property type="entry name" value="Prp46/PLRG1-like"/>
</dbReference>
<dbReference type="InterPro" id="IPR015943">
    <property type="entry name" value="WD40/YVTN_repeat-like_dom_sf"/>
</dbReference>
<dbReference type="InterPro" id="IPR019775">
    <property type="entry name" value="WD40_repeat_CS"/>
</dbReference>
<dbReference type="InterPro" id="IPR036322">
    <property type="entry name" value="WD40_repeat_dom_sf"/>
</dbReference>
<dbReference type="InterPro" id="IPR001680">
    <property type="entry name" value="WD40_rpt"/>
</dbReference>
<dbReference type="PANTHER" id="PTHR19923:SF0">
    <property type="entry name" value="PLEIOTROPIC REGULATOR 1"/>
    <property type="match status" value="1"/>
</dbReference>
<dbReference type="PANTHER" id="PTHR19923">
    <property type="entry name" value="WD40 REPEAT PROTEINPRL1/PRL2-RELATED"/>
    <property type="match status" value="1"/>
</dbReference>
<dbReference type="Pfam" id="PF00400">
    <property type="entry name" value="WD40"/>
    <property type="match status" value="6"/>
</dbReference>
<dbReference type="PRINTS" id="PR00320">
    <property type="entry name" value="GPROTEINBRPT"/>
</dbReference>
<dbReference type="SMART" id="SM00320">
    <property type="entry name" value="WD40"/>
    <property type="match status" value="7"/>
</dbReference>
<dbReference type="SUPFAM" id="SSF50978">
    <property type="entry name" value="WD40 repeat-like"/>
    <property type="match status" value="1"/>
</dbReference>
<dbReference type="PROSITE" id="PS00678">
    <property type="entry name" value="WD_REPEATS_1"/>
    <property type="match status" value="2"/>
</dbReference>
<dbReference type="PROSITE" id="PS50082">
    <property type="entry name" value="WD_REPEATS_2"/>
    <property type="match status" value="5"/>
</dbReference>
<dbReference type="PROSITE" id="PS50294">
    <property type="entry name" value="WD_REPEATS_REGION"/>
    <property type="match status" value="1"/>
</dbReference>
<name>PRP46_SCHPO</name>
<sequence length="473" mass="52418">MTEAKNISDDTDVLSLTTNSLRTSKTLFGAEFGSVTSFDDTVAQNLKRTYKEHLEYGSVLGGTVGKRKNRHYEEDTIGSNALTVRADSENPSSQVITKFSDPNKKIAGQVSMQSLEKIKGVPEAAHRIAGESQASLVKRTLAEQIRPEWHAPWTLMRVISGHLGWVRCVDVEPGNQWFCTGAGDRTIKIWDLASGVLKLTLTGHIATVRGLAVSPRHPYLFSCGEDKMVKCWDLETNKVIRHYHGHLSGVYALKLHPTLDVLVTAGRDAVARVWDMRTRQNVHVLSGHKSTVASLAVQEFDPQVVTGSMDSTIRLWDLAAGKTLTTLTHHKKTVRALSLHPDEFTFASGSSDNIKHWKFPEGAFMGNFEGHNAIVNTLSINSDNVMFSGADNGSMCFWDWKSGHKYQELQSVVQPGSLDSEAGIFASSFDKTGLRLITCEADKSVKIYKQVDNATPETHPNLPWTPSNLRRRY</sequence>
<comment type="function">
    <text evidence="1 3">Required for both cell cycle progression at G2/M and pre-mRNA splicing. Interacts genetically with the PRP4 kinase.</text>
</comment>
<comment type="subunit">
    <text evidence="2">Belongs to the 40S cdc5-associated complex (or cwf complex), a spliceosome sub-complex reminiscent of a late-stage spliceosome composed of the U2, U5 and U6 snRNAs and at least brr2, cdc5, cwf2/prp3, cwf3/syf1, cwf4/syf3, cwf5/ecm2, spp42/cwf6, cwf7/spf27, cwf8, cwf9, cwf10, cwf11, cwf12, prp45/cwf13, cwf14, cwf15, cwf16, cwf17, cwf18, cwf19, cwf20, cwf21, cwf22, cwf23, cwf24, cwf25, cwf26, cyp7/cwf27, cwf28, cwf29/ist3, lea1, msl1, prp5/cwf1, prp10, prp12/sap130, prp17, prp22, sap61, sap62, sap114, sap145, slu7, smb1, smd1, smd3, smf1, smg1 and syf2.</text>
</comment>
<comment type="interaction">
    <interactant intactId="EBI-538787">
        <id>O13615</id>
    </interactant>
    <interactant intactId="EBI-538771">
        <id>P39964</id>
        <label>cdc5</label>
    </interactant>
    <organismsDiffer>false</organismsDiffer>
    <experiments>7</experiments>
</comment>
<comment type="subcellular location">
    <subcellularLocation>
        <location evidence="4">Nucleus</location>
    </subcellularLocation>
</comment>
<comment type="similarity">
    <text evidence="4">Belongs to the WD repeat PRL1/PRL2 family.</text>
</comment>
<accession>O13615</accession>
<protein>
    <recommendedName>
        <fullName>Pre-mRNA-splicing factor prp5</fullName>
    </recommendedName>
    <alternativeName>
        <fullName>Complexed with cdc5 protein 1</fullName>
    </alternativeName>
    <alternativeName>
        <fullName>Pre-mRNA-processing protein 5</fullName>
    </alternativeName>
</protein>
<reference key="1">
    <citation type="journal article" date="1999" name="Mol. Cell. Biol.">
        <title>Myb-related fission yeast cdc5p is a component of a 40S snRNP-containing complex and is essential for pre-mRNA splicing.</title>
        <authorList>
            <person name="McDonald W.H."/>
            <person name="Ohi R."/>
            <person name="Smelkova N."/>
            <person name="Frendewey D."/>
            <person name="Gould K.L."/>
        </authorList>
    </citation>
    <scope>NUCLEOTIDE SEQUENCE [GENOMIC DNA]</scope>
    <scope>PROTEIN SEQUENCE OF 26-47</scope>
    <scope>FUNCTION</scope>
</reference>
<reference key="2">
    <citation type="journal article" date="2000" name="Yeast">
        <title>A 38 kb segment containing the cdc2 gene from the left arm of fission yeast chromosome II: sequence analysis and characterization of the genomic DNA and cDNAs encoded on the segment.</title>
        <authorList>
            <person name="Machida M."/>
            <person name="Yamazaki S."/>
            <person name="Kunihiro S."/>
            <person name="Tanaka T."/>
            <person name="Kushida N."/>
            <person name="Jinno K."/>
            <person name="Haikawa Y."/>
            <person name="Yamazaki J."/>
            <person name="Yamamoto S."/>
            <person name="Sekine M."/>
            <person name="Oguchi A."/>
            <person name="Nagai Y."/>
            <person name="Sakai M."/>
            <person name="Aoki K."/>
            <person name="Ogura K."/>
            <person name="Kudoh Y."/>
            <person name="Kikuchi H."/>
            <person name="Zhang M.Q."/>
            <person name="Yanagida M."/>
        </authorList>
    </citation>
    <scope>NUCLEOTIDE SEQUENCE [LARGE SCALE GENOMIC DNA]</scope>
    <source>
        <strain>972 / ATCC 24843</strain>
    </source>
</reference>
<reference key="3">
    <citation type="journal article" date="2002" name="Nature">
        <title>The genome sequence of Schizosaccharomyces pombe.</title>
        <authorList>
            <person name="Wood V."/>
            <person name="Gwilliam R."/>
            <person name="Rajandream M.A."/>
            <person name="Lyne M.H."/>
            <person name="Lyne R."/>
            <person name="Stewart A."/>
            <person name="Sgouros J.G."/>
            <person name="Peat N."/>
            <person name="Hayles J."/>
            <person name="Baker S.G."/>
            <person name="Basham D."/>
            <person name="Bowman S."/>
            <person name="Brooks K."/>
            <person name="Brown D."/>
            <person name="Brown S."/>
            <person name="Chillingworth T."/>
            <person name="Churcher C.M."/>
            <person name="Collins M."/>
            <person name="Connor R."/>
            <person name="Cronin A."/>
            <person name="Davis P."/>
            <person name="Feltwell T."/>
            <person name="Fraser A."/>
            <person name="Gentles S."/>
            <person name="Goble A."/>
            <person name="Hamlin N."/>
            <person name="Harris D.E."/>
            <person name="Hidalgo J."/>
            <person name="Hodgson G."/>
            <person name="Holroyd S."/>
            <person name="Hornsby T."/>
            <person name="Howarth S."/>
            <person name="Huckle E.J."/>
            <person name="Hunt S."/>
            <person name="Jagels K."/>
            <person name="James K.D."/>
            <person name="Jones L."/>
            <person name="Jones M."/>
            <person name="Leather S."/>
            <person name="McDonald S."/>
            <person name="McLean J."/>
            <person name="Mooney P."/>
            <person name="Moule S."/>
            <person name="Mungall K.L."/>
            <person name="Murphy L.D."/>
            <person name="Niblett D."/>
            <person name="Odell C."/>
            <person name="Oliver K."/>
            <person name="O'Neil S."/>
            <person name="Pearson D."/>
            <person name="Quail M.A."/>
            <person name="Rabbinowitsch E."/>
            <person name="Rutherford K.M."/>
            <person name="Rutter S."/>
            <person name="Saunders D."/>
            <person name="Seeger K."/>
            <person name="Sharp S."/>
            <person name="Skelton J."/>
            <person name="Simmonds M.N."/>
            <person name="Squares R."/>
            <person name="Squares S."/>
            <person name="Stevens K."/>
            <person name="Taylor K."/>
            <person name="Taylor R.G."/>
            <person name="Tivey A."/>
            <person name="Walsh S.V."/>
            <person name="Warren T."/>
            <person name="Whitehead S."/>
            <person name="Woodward J.R."/>
            <person name="Volckaert G."/>
            <person name="Aert R."/>
            <person name="Robben J."/>
            <person name="Grymonprez B."/>
            <person name="Weltjens I."/>
            <person name="Vanstreels E."/>
            <person name="Rieger M."/>
            <person name="Schaefer M."/>
            <person name="Mueller-Auer S."/>
            <person name="Gabel C."/>
            <person name="Fuchs M."/>
            <person name="Duesterhoeft A."/>
            <person name="Fritzc C."/>
            <person name="Holzer E."/>
            <person name="Moestl D."/>
            <person name="Hilbert H."/>
            <person name="Borzym K."/>
            <person name="Langer I."/>
            <person name="Beck A."/>
            <person name="Lehrach H."/>
            <person name="Reinhardt R."/>
            <person name="Pohl T.M."/>
            <person name="Eger P."/>
            <person name="Zimmermann W."/>
            <person name="Wedler H."/>
            <person name="Wambutt R."/>
            <person name="Purnelle B."/>
            <person name="Goffeau A."/>
            <person name="Cadieu E."/>
            <person name="Dreano S."/>
            <person name="Gloux S."/>
            <person name="Lelaure V."/>
            <person name="Mottier S."/>
            <person name="Galibert F."/>
            <person name="Aves S.J."/>
            <person name="Xiang Z."/>
            <person name="Hunt C."/>
            <person name="Moore K."/>
            <person name="Hurst S.M."/>
            <person name="Lucas M."/>
            <person name="Rochet M."/>
            <person name="Gaillardin C."/>
            <person name="Tallada V.A."/>
            <person name="Garzon A."/>
            <person name="Thode G."/>
            <person name="Daga R.R."/>
            <person name="Cruzado L."/>
            <person name="Jimenez J."/>
            <person name="Sanchez M."/>
            <person name="del Rey F."/>
            <person name="Benito J."/>
            <person name="Dominguez A."/>
            <person name="Revuelta J.L."/>
            <person name="Moreno S."/>
            <person name="Armstrong J."/>
            <person name="Forsburg S.L."/>
            <person name="Cerutti L."/>
            <person name="Lowe T."/>
            <person name="McCombie W.R."/>
            <person name="Paulsen I."/>
            <person name="Potashkin J."/>
            <person name="Shpakovski G.V."/>
            <person name="Ussery D."/>
            <person name="Barrell B.G."/>
            <person name="Nurse P."/>
        </authorList>
    </citation>
    <scope>NUCLEOTIDE SEQUENCE [LARGE SCALE GENOMIC DNA]</scope>
    <source>
        <strain>972 / ATCC 24843</strain>
    </source>
</reference>
<reference key="4">
    <citation type="journal article" date="1998" name="Curr. Genet.">
        <title>Cell-division-cycle defects associated with fission yeast pre-mRNA splicing mutants.</title>
        <authorList>
            <person name="Potashkin J."/>
            <person name="Kim D."/>
            <person name="Fons M."/>
            <person name="Humphrey T."/>
            <person name="Frendewey D."/>
        </authorList>
    </citation>
    <scope>FUNCTION</scope>
</reference>
<reference key="5">
    <citation type="journal article" date="2001" name="EMBO Rep.">
        <title>Fission yeast Prp4p kinase regulates pre-mRNA splicing by phosphorylating a non-SR-splicing factor.</title>
        <authorList>
            <person name="Schwelnus W."/>
            <person name="Richert K."/>
            <person name="Opitz F."/>
            <person name="Gross T."/>
            <person name="Habara Y."/>
            <person name="Tani T."/>
            <person name="Kaeufer N.F."/>
        </authorList>
    </citation>
    <scope>GENETIC INTERACTION WITH PRP4</scope>
</reference>
<reference key="6">
    <citation type="journal article" date="2002" name="Mol. Cell. Biol.">
        <title>Proteomics analysis reveals stable multiprotein complexes in both fission and budding yeasts containing Myb-related Cdc5p/Cef1p, novel pre-mRNA splicing factors, and snRNAs.</title>
        <authorList>
            <person name="Ohi M.D."/>
            <person name="Link A.J."/>
            <person name="Ren L."/>
            <person name="Jennings J.L."/>
            <person name="McDonald W.H."/>
            <person name="Gould K.L."/>
        </authorList>
    </citation>
    <scope>IDENTIFICATION IN THE CWF COMPLEX</scope>
    <scope>IDENTIFICATION BY MASS SPECTROMETRY</scope>
</reference>
<feature type="chain" id="PRO_0000051167" description="Pre-mRNA-splicing factor prp5">
    <location>
        <begin position="1"/>
        <end position="473"/>
    </location>
</feature>
<feature type="repeat" description="WD 1">
    <location>
        <begin position="161"/>
        <end position="191"/>
    </location>
</feature>
<feature type="repeat" description="WD 2">
    <location>
        <begin position="203"/>
        <end position="233"/>
    </location>
</feature>
<feature type="repeat" description="WD 3">
    <location>
        <begin position="245"/>
        <end position="275"/>
    </location>
</feature>
<feature type="repeat" description="WD 4">
    <location>
        <begin position="287"/>
        <end position="317"/>
    </location>
</feature>
<feature type="repeat" description="WD 5">
    <location>
        <begin position="329"/>
        <end position="358"/>
    </location>
</feature>
<feature type="repeat" description="WD 6">
    <location>
        <begin position="370"/>
        <end position="399"/>
    </location>
</feature>
<feature type="repeat" description="WD 7">
    <location>
        <begin position="419"/>
        <end position="449"/>
    </location>
</feature>
<feature type="helix" evidence="6">
    <location>
        <begin position="92"/>
        <end position="98"/>
    </location>
</feature>
<feature type="strand" evidence="6">
    <location>
        <begin position="105"/>
        <end position="107"/>
    </location>
</feature>
<feature type="helix" evidence="6">
    <location>
        <begin position="112"/>
        <end position="115"/>
    </location>
</feature>
<feature type="strand" evidence="6">
    <location>
        <begin position="116"/>
        <end position="118"/>
    </location>
</feature>
<feature type="turn" evidence="6">
    <location>
        <begin position="122"/>
        <end position="124"/>
    </location>
</feature>
<feature type="helix" evidence="6">
    <location>
        <begin position="125"/>
        <end position="142"/>
    </location>
</feature>
<feature type="strand" evidence="6">
    <location>
        <begin position="153"/>
        <end position="159"/>
    </location>
</feature>
<feature type="strand" evidence="6">
    <location>
        <begin position="175"/>
        <end position="182"/>
    </location>
</feature>
<feature type="strand" evidence="6">
    <location>
        <begin position="187"/>
        <end position="191"/>
    </location>
</feature>
<feature type="turn" evidence="6">
    <location>
        <begin position="192"/>
        <end position="194"/>
    </location>
</feature>
<feature type="strand" evidence="6">
    <location>
        <begin position="197"/>
        <end position="201"/>
    </location>
</feature>
<feature type="strand" evidence="6">
    <location>
        <begin position="208"/>
        <end position="213"/>
    </location>
</feature>
<feature type="strand" evidence="6">
    <location>
        <begin position="215"/>
        <end position="224"/>
    </location>
</feature>
<feature type="strand" evidence="6">
    <location>
        <begin position="229"/>
        <end position="233"/>
    </location>
</feature>
<feature type="turn" evidence="6">
    <location>
        <begin position="234"/>
        <end position="236"/>
    </location>
</feature>
<feature type="strand" evidence="6">
    <location>
        <begin position="238"/>
        <end position="243"/>
    </location>
</feature>
<feature type="strand" evidence="6">
    <location>
        <begin position="250"/>
        <end position="255"/>
    </location>
</feature>
<feature type="strand" evidence="6">
    <location>
        <begin position="257"/>
        <end position="266"/>
    </location>
</feature>
<feature type="strand" evidence="6">
    <location>
        <begin position="271"/>
        <end position="275"/>
    </location>
</feature>
<feature type="turn" evidence="6">
    <location>
        <begin position="276"/>
        <end position="278"/>
    </location>
</feature>
<feature type="strand" evidence="6">
    <location>
        <begin position="281"/>
        <end position="285"/>
    </location>
</feature>
<feature type="strand" evidence="5">
    <location>
        <begin position="294"/>
        <end position="297"/>
    </location>
</feature>
<feature type="strand" evidence="6">
    <location>
        <begin position="299"/>
        <end position="302"/>
    </location>
</feature>
<feature type="strand" evidence="6">
    <location>
        <begin position="304"/>
        <end position="307"/>
    </location>
</feature>
<feature type="strand" evidence="6">
    <location>
        <begin position="313"/>
        <end position="317"/>
    </location>
</feature>
<feature type="turn" evidence="6">
    <location>
        <begin position="318"/>
        <end position="321"/>
    </location>
</feature>
<feature type="strand" evidence="6">
    <location>
        <begin position="322"/>
        <end position="327"/>
    </location>
</feature>
<feature type="strand" evidence="6">
    <location>
        <begin position="334"/>
        <end position="339"/>
    </location>
</feature>
<feature type="turn" evidence="6">
    <location>
        <begin position="341"/>
        <end position="343"/>
    </location>
</feature>
<feature type="strand" evidence="6">
    <location>
        <begin position="344"/>
        <end position="352"/>
    </location>
</feature>
<feature type="strand" evidence="6">
    <location>
        <begin position="354"/>
        <end position="358"/>
    </location>
</feature>
<feature type="turn" evidence="6">
    <location>
        <begin position="359"/>
        <end position="362"/>
    </location>
</feature>
<feature type="strand" evidence="6">
    <location>
        <begin position="363"/>
        <end position="368"/>
    </location>
</feature>
<feature type="strand" evidence="6">
    <location>
        <begin position="375"/>
        <end position="380"/>
    </location>
</feature>
<feature type="strand" evidence="6">
    <location>
        <begin position="382"/>
        <end position="390"/>
    </location>
</feature>
<feature type="strand" evidence="6">
    <location>
        <begin position="393"/>
        <end position="399"/>
    </location>
</feature>
<feature type="turn" evidence="6">
    <location>
        <begin position="400"/>
        <end position="403"/>
    </location>
</feature>
<feature type="strand" evidence="6">
    <location>
        <begin position="404"/>
        <end position="410"/>
    </location>
</feature>
<feature type="helix" evidence="6">
    <location>
        <begin position="419"/>
        <end position="421"/>
    </location>
</feature>
<feature type="strand" evidence="6">
    <location>
        <begin position="424"/>
        <end position="429"/>
    </location>
</feature>
<feature type="strand" evidence="6">
    <location>
        <begin position="431"/>
        <end position="440"/>
    </location>
</feature>
<feature type="strand" evidence="6">
    <location>
        <begin position="445"/>
        <end position="450"/>
    </location>
</feature>
<feature type="turn" evidence="6">
    <location>
        <begin position="456"/>
        <end position="458"/>
    </location>
</feature>
<proteinExistence type="evidence at protein level"/>
<gene>
    <name type="primary">prp5</name>
    <name type="synonym">cwf1</name>
    <name type="ORF">pi024</name>
    <name type="ORF">SPBP22H7.07</name>
</gene>
<evidence type="ECO:0000269" key="1">
    <source>
    </source>
</evidence>
<evidence type="ECO:0000269" key="2">
    <source>
    </source>
</evidence>
<evidence type="ECO:0000269" key="3">
    <source>
    </source>
</evidence>
<evidence type="ECO:0000305" key="4"/>
<evidence type="ECO:0007829" key="5">
    <source>
        <dbReference type="PDB" id="9ESH"/>
    </source>
</evidence>
<evidence type="ECO:0007829" key="6">
    <source>
        <dbReference type="PDB" id="9ESI"/>
    </source>
</evidence>
<organism>
    <name type="scientific">Schizosaccharomyces pombe (strain 972 / ATCC 24843)</name>
    <name type="common">Fission yeast</name>
    <dbReference type="NCBI Taxonomy" id="284812"/>
    <lineage>
        <taxon>Eukaryota</taxon>
        <taxon>Fungi</taxon>
        <taxon>Dikarya</taxon>
        <taxon>Ascomycota</taxon>
        <taxon>Taphrinomycotina</taxon>
        <taxon>Schizosaccharomycetes</taxon>
        <taxon>Schizosaccharomycetales</taxon>
        <taxon>Schizosaccharomycetaceae</taxon>
        <taxon>Schizosaccharomyces</taxon>
    </lineage>
</organism>